<gene>
    <name type="primary">Wwc1</name>
    <name type="synonym">Kiaa0869</name>
</gene>
<evidence type="ECO:0000250" key="1"/>
<evidence type="ECO:0000250" key="2">
    <source>
        <dbReference type="UniProtKB" id="Q8IX03"/>
    </source>
</evidence>
<evidence type="ECO:0000255" key="3"/>
<evidence type="ECO:0000255" key="4">
    <source>
        <dbReference type="PROSITE-ProRule" id="PRU00041"/>
    </source>
</evidence>
<evidence type="ECO:0000255" key="5">
    <source>
        <dbReference type="PROSITE-ProRule" id="PRU00224"/>
    </source>
</evidence>
<evidence type="ECO:0000256" key="6">
    <source>
        <dbReference type="SAM" id="MobiDB-lite"/>
    </source>
</evidence>
<evidence type="ECO:0000269" key="7">
    <source>
    </source>
</evidence>
<evidence type="ECO:0000269" key="8">
    <source>
    </source>
</evidence>
<evidence type="ECO:0000269" key="9">
    <source>
    </source>
</evidence>
<evidence type="ECO:0000305" key="10"/>
<evidence type="ECO:0007744" key="11">
    <source>
    </source>
</evidence>
<evidence type="ECO:0007744" key="12">
    <source>
    </source>
</evidence>
<evidence type="ECO:0007829" key="13">
    <source>
        <dbReference type="PDB" id="6JJX"/>
    </source>
</evidence>
<evidence type="ECO:0007829" key="14">
    <source>
        <dbReference type="PDB" id="6JJY"/>
    </source>
</evidence>
<sequence>MPRPELPLPEGWEEARDFDGKVYYIDHRNRTTSWIDPRDRYTKPLTFADCISDELPLGWEEAYDPQVGDYFIDHNTKTTQIEDPRVQWRREQEHMLKDYLVVAQEALSAQKEIYQVKQQRLELAQQEYQQLHAVWEHKLGSQVSLVSGSSSSSKYDPEILKAEIATAKSRVNKLKREMVHLQHELQFKERGFQTLKKIDERMSDAQGGYKLDEAQAVLRETKAIKKAITCGEKEKQDLIKSLAMLKDGFRTDRGSHSDLWSSSSSLESSSFPMPKQFLDVSSQTDISGSFSTSSNNQLAEKVRLRLRYEEAKRRIANLKIQLAKLDSEAWPGVLDSERDRLILINEKEELLKEMRFISPRKWTQGEVEQLEMARRRLEKDLQAARDTQSKALTERLKLNSKRNQLVRELEEATRQVATLHSQLKSLSSSMQSLSSGSSPGSLTSSRGSLAASSLDSSTSASFTDLYYDPFEQLDSELQSKVELLFLEGATGFRPSGCITTIHEDEVAKTQKAEGGSRLQALRSLSGTPRSMTSLSPRSSLSSPSPPCSPLITDPLLTGDAFLAPLEFEDTELSTTLCELNLGGSGTQERYRLEEPGPEGKPLGQAASVAPGCGLKVACVSAAVSDESVAGDSGVYEASAQRPGTSEAAAFDSDESEAVGATRVQIALKYDEKNKQFAILIIQLSHLSALSLQQDQKVNIRVAILPCSESSTCLFRTRPLDSANTLVFNEAFWVSISYPALHQKTLRVDVCTTDRSHTEECLGGAQISLAEVCRSGERSTRWYNLLSYKYLKKQCREPQPTEAPGPDHVDAVSALLEQTAVELEKRQEGRSSSQTLEGSWTYEEEASENEAVAEEEEEGEEDVFTEKVSPEAEECPALKVDRETNTDSVAPSPTVVRPKDRRVGAPSTGPFLRGNTIIRSKTFSPGPQSQYVCRLNRSDSDSSTLSKKPPFVRNSLERRSVRMKRPSSVKSLRTERLIRTSLDLELDLQATRTWHSQLTQEISVLKELKEHLEQAKNHGEKELPQWLREDERFRLLLRMLEKKVDRGEHKSELQADKMMRAAAKDVHRLRGQSCKEPPEVQSFREKMAFFTRPRMNIPALSADDV</sequence>
<feature type="chain" id="PRO_0000242154" description="Protein KIBRA">
    <location>
        <begin position="1"/>
        <end position="1104"/>
    </location>
</feature>
<feature type="domain" description="WW 1" evidence="5">
    <location>
        <begin position="6"/>
        <end position="39"/>
    </location>
</feature>
<feature type="domain" description="WW 2" evidence="5">
    <location>
        <begin position="53"/>
        <end position="86"/>
    </location>
</feature>
<feature type="domain" description="C2" evidence="4">
    <location>
        <begin position="659"/>
        <end position="782"/>
    </location>
</feature>
<feature type="region of interest" description="Disordered" evidence="6">
    <location>
        <begin position="429"/>
        <end position="449"/>
    </location>
</feature>
<feature type="region of interest" description="Disordered" evidence="6">
    <location>
        <begin position="509"/>
        <end position="547"/>
    </location>
</feature>
<feature type="region of interest" description="Disordered" evidence="6">
    <location>
        <begin position="822"/>
        <end position="949"/>
    </location>
</feature>
<feature type="region of interest" description="Interaction with histone H3" evidence="1">
    <location>
        <begin position="836"/>
        <end position="1104"/>
    </location>
</feature>
<feature type="region of interest" description="Interaction with PRKCZ" evidence="1">
    <location>
        <begin position="945"/>
        <end position="988"/>
    </location>
</feature>
<feature type="region of interest" description="Interaction with PRKCZ" evidence="2">
    <location>
        <begin position="948"/>
        <end position="967"/>
    </location>
</feature>
<feature type="coiled-coil region" evidence="3">
    <location>
        <begin position="107"/>
        <end position="193"/>
    </location>
</feature>
<feature type="coiled-coil region" evidence="3">
    <location>
        <begin position="994"/>
        <end position="1024"/>
    </location>
</feature>
<feature type="short sequence motif" description="ADDV motif">
    <location>
        <begin position="1102"/>
        <end position="1104"/>
    </location>
</feature>
<feature type="compositionally biased region" description="Low complexity" evidence="6">
    <location>
        <begin position="527"/>
        <end position="542"/>
    </location>
</feature>
<feature type="compositionally biased region" description="Acidic residues" evidence="6">
    <location>
        <begin position="841"/>
        <end position="862"/>
    </location>
</feature>
<feature type="compositionally biased region" description="Polar residues" evidence="6">
    <location>
        <begin position="916"/>
        <end position="930"/>
    </location>
</feature>
<feature type="modified residue" description="Phosphoserine" evidence="12">
    <location>
        <position position="141"/>
    </location>
</feature>
<feature type="modified residue" description="Phosphoserine" evidence="2">
    <location>
        <position position="535"/>
    </location>
</feature>
<feature type="modified residue" description="Phosphoserine; by CDK1" evidence="2">
    <location>
        <position position="542"/>
    </location>
</feature>
<feature type="modified residue" description="Phosphoserine" evidence="11">
    <location>
        <position position="887"/>
    </location>
</feature>
<feature type="modified residue" description="Phosphoserine" evidence="11">
    <location>
        <position position="891"/>
    </location>
</feature>
<feature type="modified residue" description="Phosphoserine" evidence="12">
    <location>
        <position position="919"/>
    </location>
</feature>
<feature type="modified residue" description="Phosphothreonine" evidence="2">
    <location>
        <position position="921"/>
    </location>
</feature>
<feature type="modified residue" description="Phosphoserine; by CDK1" evidence="2">
    <location>
        <position position="923"/>
    </location>
</feature>
<feature type="modified residue" description="Phosphoserine" evidence="12">
    <location>
        <position position="939"/>
    </location>
</feature>
<feature type="modified residue" description="Phosphoserine; by PKC/PRKCZ" evidence="2">
    <location>
        <position position="967"/>
    </location>
</feature>
<feature type="modified residue" description="Phosphoserine; by PKC/PRKCZ" evidence="2">
    <location>
        <position position="970"/>
    </location>
</feature>
<feature type="sequence conflict" description="In Ref. 3; BAD90184." evidence="10" ref="3">
    <original>SQVSL</original>
    <variation>AGLPV</variation>
    <location>
        <begin position="141"/>
        <end position="145"/>
    </location>
</feature>
<feature type="sequence conflict" description="In Ref. 4; AAH06733." evidence="10" ref="4">
    <original>E</original>
    <variation>K</variation>
    <location>
        <position position="348"/>
    </location>
</feature>
<feature type="strand" evidence="13">
    <location>
        <begin position="12"/>
        <end position="16"/>
    </location>
</feature>
<feature type="strand" evidence="13">
    <location>
        <begin position="22"/>
        <end position="26"/>
    </location>
</feature>
<feature type="turn" evidence="13">
    <location>
        <begin position="27"/>
        <end position="30"/>
    </location>
</feature>
<feature type="strand" evidence="13">
    <location>
        <begin position="31"/>
        <end position="35"/>
    </location>
</feature>
<feature type="helix" evidence="13">
    <location>
        <begin position="39"/>
        <end position="42"/>
    </location>
</feature>
<feature type="helix" evidence="14">
    <location>
        <begin position="47"/>
        <end position="49"/>
    </location>
</feature>
<feature type="strand" evidence="13">
    <location>
        <begin position="59"/>
        <end position="64"/>
    </location>
</feature>
<feature type="turn" evidence="13">
    <location>
        <begin position="65"/>
        <end position="67"/>
    </location>
</feature>
<feature type="strand" evidence="13">
    <location>
        <begin position="68"/>
        <end position="73"/>
    </location>
</feature>
<feature type="turn" evidence="13">
    <location>
        <begin position="74"/>
        <end position="77"/>
    </location>
</feature>
<feature type="strand" evidence="13">
    <location>
        <begin position="78"/>
        <end position="82"/>
    </location>
</feature>
<feature type="helix" evidence="13">
    <location>
        <begin position="84"/>
        <end position="116"/>
    </location>
</feature>
<feature type="turn" evidence="13">
    <location>
        <begin position="117"/>
        <end position="119"/>
    </location>
</feature>
<feature type="helix" evidence="13">
    <location>
        <begin position="122"/>
        <end position="128"/>
    </location>
</feature>
<organism>
    <name type="scientific">Mus musculus</name>
    <name type="common">Mouse</name>
    <dbReference type="NCBI Taxonomy" id="10090"/>
    <lineage>
        <taxon>Eukaryota</taxon>
        <taxon>Metazoa</taxon>
        <taxon>Chordata</taxon>
        <taxon>Craniata</taxon>
        <taxon>Vertebrata</taxon>
        <taxon>Euteleostomi</taxon>
        <taxon>Mammalia</taxon>
        <taxon>Eutheria</taxon>
        <taxon>Euarchontoglires</taxon>
        <taxon>Glires</taxon>
        <taxon>Rodentia</taxon>
        <taxon>Myomorpha</taxon>
        <taxon>Muroidea</taxon>
        <taxon>Muridae</taxon>
        <taxon>Murinae</taxon>
        <taxon>Mus</taxon>
        <taxon>Mus</taxon>
    </lineage>
</organism>
<protein>
    <recommendedName>
        <fullName>Protein KIBRA</fullName>
    </recommendedName>
    <alternativeName>
        <fullName>Kidney and brain protein</fullName>
        <shortName>KIBRA</shortName>
    </alternativeName>
    <alternativeName>
        <fullName>WW domain-containing protein 1</fullName>
    </alternativeName>
</protein>
<comment type="function">
    <text evidence="2 7 8 9">Regulator of the Hippo signaling pathway, also known as the Salvador-Warts-Hippo (SWH) pathway. Enhances phosphorylation of LATS1 and YAP1 and negatively regulates cell proliferation and organ growth due to a suppression of the transcriptional activity of YAP1, the major effector of the Hippo pathway. Along with NF2 can synergistically induce the phosphorylation of LATS1 and LATS2 and function in the regulation of Hippo signaling pathway. Acts as a transcriptional coactivator of ESR1 which plays an essential role in DYNLL1-mediated ESR1 transactivation. Modulates directional migration of podocytes. May be associated with memory performance (By similarity). Regulates collagen-stimulated activation of the ERK/MAPK cascade (PubMed:18190796). Plays an important role in regulating AMPA-selective glutamate receptors (AMPARs) trafficking (PubMed:21943600, PubMed:31730661).</text>
</comment>
<comment type="subunit">
    <text evidence="2 9">Homodimer. Forms heterodimers with WWC2 and WWC3. Interacts with DDN. Interacts with DYNLL1 and histone H3. The interaction with DYNLL1 is mandatory for the recruitment and transactivation functions of ESR1 or DYNLL1 to the target chromatin and the interaction with histone H3 ensures proper regulatory interaction of WWC1-DYNLL1-ESR1 complexes with target chromatin. Interacts (via WW domains) with DDR1 (via PPxY motif) in a collagen-regulated manner. Interacts with PRKCZ (via the protein kinase domain). Forms a tripartite complex with DDR1 and PRKCZ, but predominantly in the absence of collagen. Interacts (via the ADDV motif) with PATJ (via PDZ domain 8). Interacts (via WW domains) with SYNPO (via PPxY motifs). Interacts with NF2 and SNX4 (By similarity). Interacts with CCDC141; retains AMPAR in the cytosol after internalization (PubMed:31730661). Interacts with DLC1 and PRKCZ (By similarity). Interacts (via WW domains) with LATS1 and LATS2 (By similarity).</text>
</comment>
<comment type="subcellular location">
    <subcellularLocation>
        <location evidence="2">Cytoplasm</location>
        <location evidence="2">Perinuclear region</location>
    </subcellularLocation>
    <subcellularLocation>
        <location evidence="2">Nucleus</location>
    </subcellularLocation>
    <subcellularLocation>
        <location evidence="2">Cell projection</location>
        <location evidence="2">Ruffle membrane</location>
    </subcellularLocation>
    <subcellularLocation>
        <location evidence="7 8">Cytoplasm</location>
        <location evidence="7 8">Cytosol</location>
    </subcellularLocation>
    <text evidence="2">Colocalizes with PRKCZ in the perinuclear region.</text>
</comment>
<comment type="tissue specificity">
    <text evidence="7">Mammary epithelium.</text>
</comment>
<comment type="developmental stage">
    <text evidence="7">Expressed in mammary tissue throughout development (at protein level). Strongly up-regulated during pregnancy, falls during lactation and is again up-regulated during involution of the gland at weaning.</text>
</comment>
<comment type="domain">
    <text evidence="2">The C2-domain mediates homodimerization.</text>
</comment>
<comment type="PTM">
    <text evidence="2">Phosphorylation at Ser-542 and Ser-923 by CDK1 in response to spindle damage stress regulates mitotic exit, these two sites are dephosphorylated by CDC14B.</text>
</comment>
<comment type="disruption phenotype">
    <text evidence="8">Deficient mice have significant deficits in hippocampal long-term potentiation (LTP) and long-term depression (LTD)vcand have profound learning and memory defects.</text>
</comment>
<comment type="similarity">
    <text evidence="10">Belongs to the WWC family. KIBRA subfamily.</text>
</comment>
<comment type="sequence caution" evidence="10">
    <conflict type="erroneous initiation">
        <sequence resource="EMBL-CDS" id="AAH06733"/>
    </conflict>
    <text>Truncated N-terminus.</text>
</comment>
<comment type="sequence caution" evidence="10">
    <conflict type="erroneous initiation">
        <sequence resource="EMBL-CDS" id="AAH37006"/>
    </conflict>
    <text>Truncated N-terminus.</text>
</comment>
<reference key="1">
    <citation type="submission" date="2005-10" db="EMBL/GenBank/DDBJ databases">
        <title>Protein-coding sequence of KIBRA from Mus musculus.</title>
        <authorList>
            <person name="Kremerskothen J."/>
        </authorList>
    </citation>
    <scope>NUCLEOTIDE SEQUENCE [MRNA]</scope>
    <source>
        <strain>129/SvEv</strain>
    </source>
</reference>
<reference key="2">
    <citation type="journal article" date="2009" name="PLoS Biol.">
        <title>Lineage-specific biology revealed by a finished genome assembly of the mouse.</title>
        <authorList>
            <person name="Church D.M."/>
            <person name="Goodstadt L."/>
            <person name="Hillier L.W."/>
            <person name="Zody M.C."/>
            <person name="Goldstein S."/>
            <person name="She X."/>
            <person name="Bult C.J."/>
            <person name="Agarwala R."/>
            <person name="Cherry J.L."/>
            <person name="DiCuccio M."/>
            <person name="Hlavina W."/>
            <person name="Kapustin Y."/>
            <person name="Meric P."/>
            <person name="Maglott D."/>
            <person name="Birtle Z."/>
            <person name="Marques A.C."/>
            <person name="Graves T."/>
            <person name="Zhou S."/>
            <person name="Teague B."/>
            <person name="Potamousis K."/>
            <person name="Churas C."/>
            <person name="Place M."/>
            <person name="Herschleb J."/>
            <person name="Runnheim R."/>
            <person name="Forrest D."/>
            <person name="Amos-Landgraf J."/>
            <person name="Schwartz D.C."/>
            <person name="Cheng Z."/>
            <person name="Lindblad-Toh K."/>
            <person name="Eichler E.E."/>
            <person name="Ponting C.P."/>
        </authorList>
    </citation>
    <scope>NUCLEOTIDE SEQUENCE [LARGE SCALE GENOMIC DNA]</scope>
    <source>
        <strain>C57BL/6J</strain>
    </source>
</reference>
<reference key="3">
    <citation type="submission" date="2005-02" db="EMBL/GenBank/DDBJ databases">
        <title>Prediction of the coding sequences of mouse homologues of KIAA gene. The complete nucleotide sequences of mouse KIAA-homologous cDNAs identified by screening of terminal sequences of cDNA clones randomly sampled from size-fractionated libraries.</title>
        <authorList>
            <person name="Okazaki N."/>
            <person name="Kikuno R.F."/>
            <person name="Ohara R."/>
            <person name="Inamoto S."/>
            <person name="Seino S."/>
            <person name="Nishimura M."/>
            <person name="Nagase T."/>
            <person name="Ohara O."/>
            <person name="Koga H."/>
        </authorList>
    </citation>
    <scope>NUCLEOTIDE SEQUENCE [LARGE SCALE MRNA] OF 141-1104</scope>
    <source>
        <tissue>Pancreatic islet</tissue>
    </source>
</reference>
<reference key="4">
    <citation type="journal article" date="2004" name="Genome Res.">
        <title>The status, quality, and expansion of the NIH full-length cDNA project: the Mammalian Gene Collection (MGC).</title>
        <authorList>
            <consortium name="The MGC Project Team"/>
        </authorList>
    </citation>
    <scope>NUCLEOTIDE SEQUENCE [LARGE SCALE MRNA] OF 146-1104</scope>
    <source>
        <strain>FVB/N</strain>
        <tissue>Mammary gland</tissue>
        <tissue>Mammary tumor</tissue>
        <tissue>Salivary gland</tissue>
    </source>
</reference>
<reference key="5">
    <citation type="journal article" date="2007" name="Proc. Natl. Acad. Sci. U.S.A.">
        <title>Large-scale phosphorylation analysis of mouse liver.</title>
        <authorList>
            <person name="Villen J."/>
            <person name="Beausoleil S.A."/>
            <person name="Gerber S.A."/>
            <person name="Gygi S.P."/>
        </authorList>
    </citation>
    <scope>PHOSPHORYLATION [LARGE SCALE ANALYSIS] AT SER-887 AND SER-891</scope>
    <scope>IDENTIFICATION BY MASS SPECTROMETRY [LARGE SCALE ANALYSIS]</scope>
    <source>
        <tissue>Liver</tissue>
    </source>
</reference>
<reference key="6">
    <citation type="journal article" date="2008" name="Biochim. Biophys. Acta">
        <title>KIBRA interacts with discoidin domain receptor 1 to modulate collagen-induced signalling.</title>
        <authorList>
            <person name="Hilton H.N."/>
            <person name="Stanford P.M."/>
            <person name="Harris J."/>
            <person name="Oakes S.R."/>
            <person name="Kaplan W."/>
            <person name="Daly R.J."/>
            <person name="Ormandy C.J."/>
        </authorList>
    </citation>
    <scope>FUNCTION</scope>
    <scope>SUBCELLULAR LOCATION</scope>
    <scope>TISSUE SPECIFICITY</scope>
    <scope>DEVELOPMENTAL STAGE</scope>
</reference>
<reference key="7">
    <citation type="journal article" date="2010" name="Cell">
        <title>A tissue-specific atlas of mouse protein phosphorylation and expression.</title>
        <authorList>
            <person name="Huttlin E.L."/>
            <person name="Jedrychowski M.P."/>
            <person name="Elias J.E."/>
            <person name="Goswami T."/>
            <person name="Rad R."/>
            <person name="Beausoleil S.A."/>
            <person name="Villen J."/>
            <person name="Haas W."/>
            <person name="Sowa M.E."/>
            <person name="Gygi S.P."/>
        </authorList>
    </citation>
    <scope>PHOSPHORYLATION [LARGE SCALE ANALYSIS] AT SER-141; SER-919 AND SER-939</scope>
    <scope>IDENTIFICATION BY MASS SPECTROMETRY [LARGE SCALE ANALYSIS]</scope>
    <source>
        <tissue>Brain</tissue>
        <tissue>Kidney</tissue>
        <tissue>Liver</tissue>
        <tissue>Lung</tissue>
        <tissue>Pancreas</tissue>
    </source>
</reference>
<reference key="8">
    <citation type="journal article" date="2011" name="Neuron">
        <title>Regulation of AMPA receptor function by the human memory-associated gene KIBRA.</title>
        <authorList>
            <person name="Makuch L."/>
            <person name="Volk L."/>
            <person name="Anggono V."/>
            <person name="Johnson R.C."/>
            <person name="Yu Y."/>
            <person name="Duning K."/>
            <person name="Kremerskothen J."/>
            <person name="Xia J."/>
            <person name="Takamiya K."/>
            <person name="Huganir R.L."/>
        </authorList>
    </citation>
    <scope>DISRUPTION PHENOTYPE</scope>
    <scope>FUNCTION</scope>
    <scope>SUBCELLULAR LOCATION</scope>
</reference>
<reference key="9">
    <citation type="journal article" date="2019" name="PLoS ONE">
        <title>CAMDI interacts with the human memory-associated protein KIBRA and regulates AMPAR cell surface expression and cognition.</title>
        <authorList>
            <person name="Fukuda T."/>
            <person name="Nagashima S."/>
            <person name="Inatome R."/>
            <person name="Yanagi S."/>
        </authorList>
    </citation>
    <scope>INTERACTION WITH CCDC141</scope>
    <scope>FUNCTION</scope>
</reference>
<dbReference type="EMBL" id="DQ256090">
    <property type="protein sequence ID" value="ABB51169.1"/>
    <property type="molecule type" value="mRNA"/>
</dbReference>
<dbReference type="EMBL" id="AL596084">
    <property type="status" value="NOT_ANNOTATED_CDS"/>
    <property type="molecule type" value="Genomic_DNA"/>
</dbReference>
<dbReference type="EMBL" id="AL645912">
    <property type="status" value="NOT_ANNOTATED_CDS"/>
    <property type="molecule type" value="Genomic_DNA"/>
</dbReference>
<dbReference type="EMBL" id="AK220259">
    <property type="protein sequence ID" value="BAD90184.1"/>
    <property type="molecule type" value="mRNA"/>
</dbReference>
<dbReference type="EMBL" id="BC006733">
    <property type="protein sequence ID" value="AAH06733.1"/>
    <property type="status" value="ALT_INIT"/>
    <property type="molecule type" value="mRNA"/>
</dbReference>
<dbReference type="EMBL" id="BC017638">
    <property type="protein sequence ID" value="AAH17638.1"/>
    <property type="molecule type" value="mRNA"/>
</dbReference>
<dbReference type="EMBL" id="BC037006">
    <property type="protein sequence ID" value="AAH37006.1"/>
    <property type="status" value="ALT_INIT"/>
    <property type="molecule type" value="mRNA"/>
</dbReference>
<dbReference type="CCDS" id="CCDS24545.1"/>
<dbReference type="RefSeq" id="NP_740749.1">
    <property type="nucleotide sequence ID" value="NM_170779.2"/>
</dbReference>
<dbReference type="PDB" id="6J68">
    <property type="method" value="X-ray"/>
    <property type="resolution" value="2.50 A"/>
    <property type="chains" value="A/B=5-132"/>
</dbReference>
<dbReference type="PDB" id="6J69">
    <property type="method" value="X-ray"/>
    <property type="resolution" value="2.75 A"/>
    <property type="chains" value="A=5-132"/>
</dbReference>
<dbReference type="PDB" id="6JJW">
    <property type="method" value="X-ray"/>
    <property type="resolution" value="2.40 A"/>
    <property type="chains" value="A=5-132"/>
</dbReference>
<dbReference type="PDB" id="6JJX">
    <property type="method" value="X-ray"/>
    <property type="resolution" value="2.00 A"/>
    <property type="chains" value="A/B=5-132"/>
</dbReference>
<dbReference type="PDB" id="6JJY">
    <property type="method" value="X-ray"/>
    <property type="resolution" value="2.30 A"/>
    <property type="chains" value="A=5-132"/>
</dbReference>
<dbReference type="PDBsum" id="6J68"/>
<dbReference type="PDBsum" id="6J69"/>
<dbReference type="PDBsum" id="6JJW"/>
<dbReference type="PDBsum" id="6JJX"/>
<dbReference type="PDBsum" id="6JJY"/>
<dbReference type="SMR" id="Q5SXA9"/>
<dbReference type="BioGRID" id="229255">
    <property type="interactions" value="5"/>
</dbReference>
<dbReference type="FunCoup" id="Q5SXA9">
    <property type="interactions" value="971"/>
</dbReference>
<dbReference type="STRING" id="10090.ENSMUSP00000018993"/>
<dbReference type="GlyGen" id="Q5SXA9">
    <property type="glycosylation" value="1 site"/>
</dbReference>
<dbReference type="iPTMnet" id="Q5SXA9"/>
<dbReference type="PhosphoSitePlus" id="Q5SXA9"/>
<dbReference type="jPOST" id="Q5SXA9"/>
<dbReference type="PaxDb" id="10090-ENSMUSP00000018993"/>
<dbReference type="ProteomicsDB" id="269299"/>
<dbReference type="Antibodypedia" id="48675">
    <property type="antibodies" value="219 antibodies from 26 providers"/>
</dbReference>
<dbReference type="DNASU" id="211652"/>
<dbReference type="Ensembl" id="ENSMUST00000018993.7">
    <property type="protein sequence ID" value="ENSMUSP00000018993.7"/>
    <property type="gene ID" value="ENSMUSG00000018849.7"/>
</dbReference>
<dbReference type="GeneID" id="211652"/>
<dbReference type="KEGG" id="mmu:211652"/>
<dbReference type="UCSC" id="uc007ili.1">
    <property type="organism name" value="mouse"/>
</dbReference>
<dbReference type="AGR" id="MGI:2388637"/>
<dbReference type="CTD" id="23286"/>
<dbReference type="MGI" id="MGI:2388637">
    <property type="gene designation" value="Wwc1"/>
</dbReference>
<dbReference type="VEuPathDB" id="HostDB:ENSMUSG00000018849"/>
<dbReference type="eggNOG" id="KOG3209">
    <property type="taxonomic scope" value="Eukaryota"/>
</dbReference>
<dbReference type="GeneTree" id="ENSGT00410000025556"/>
<dbReference type="HOGENOM" id="CLU_005420_0_0_1"/>
<dbReference type="InParanoid" id="Q5SXA9"/>
<dbReference type="OMA" id="QVTVVSM"/>
<dbReference type="OrthoDB" id="2020426at2759"/>
<dbReference type="PhylomeDB" id="Q5SXA9"/>
<dbReference type="TreeFam" id="TF324040"/>
<dbReference type="Reactome" id="R-MMU-2028269">
    <property type="pathway name" value="Signaling by Hippo"/>
</dbReference>
<dbReference type="BioGRID-ORCS" id="211652">
    <property type="hits" value="1 hit in 78 CRISPR screens"/>
</dbReference>
<dbReference type="ChiTaRS" id="Wwc1">
    <property type="organism name" value="mouse"/>
</dbReference>
<dbReference type="PRO" id="PR:Q5SXA9"/>
<dbReference type="Proteomes" id="UP000000589">
    <property type="component" value="Chromosome 11"/>
</dbReference>
<dbReference type="RNAct" id="Q5SXA9">
    <property type="molecule type" value="protein"/>
</dbReference>
<dbReference type="Bgee" id="ENSMUSG00000018849">
    <property type="expression patterns" value="Expressed in vestibular membrane of cochlear duct and 222 other cell types or tissues"/>
</dbReference>
<dbReference type="GO" id="GO:0005737">
    <property type="term" value="C:cytoplasm"/>
    <property type="evidence" value="ECO:0000314"/>
    <property type="project" value="UniProtKB"/>
</dbReference>
<dbReference type="GO" id="GO:0005829">
    <property type="term" value="C:cytosol"/>
    <property type="evidence" value="ECO:0007669"/>
    <property type="project" value="UniProtKB-SubCell"/>
</dbReference>
<dbReference type="GO" id="GO:0005634">
    <property type="term" value="C:nucleus"/>
    <property type="evidence" value="ECO:0000250"/>
    <property type="project" value="UniProtKB"/>
</dbReference>
<dbReference type="GO" id="GO:0048471">
    <property type="term" value="C:perinuclear region of cytoplasm"/>
    <property type="evidence" value="ECO:0007669"/>
    <property type="project" value="UniProtKB-SubCell"/>
</dbReference>
<dbReference type="GO" id="GO:0032587">
    <property type="term" value="C:ruffle membrane"/>
    <property type="evidence" value="ECO:0000250"/>
    <property type="project" value="UniProtKB"/>
</dbReference>
<dbReference type="GO" id="GO:0019900">
    <property type="term" value="F:kinase binding"/>
    <property type="evidence" value="ECO:0007669"/>
    <property type="project" value="Ensembl"/>
</dbReference>
<dbReference type="GO" id="GO:0035591">
    <property type="term" value="F:signaling adaptor activity"/>
    <property type="evidence" value="ECO:0007669"/>
    <property type="project" value="Ensembl"/>
</dbReference>
<dbReference type="GO" id="GO:0003713">
    <property type="term" value="F:transcription coactivator activity"/>
    <property type="evidence" value="ECO:0007669"/>
    <property type="project" value="Ensembl"/>
</dbReference>
<dbReference type="GO" id="GO:0016477">
    <property type="term" value="P:cell migration"/>
    <property type="evidence" value="ECO:0000250"/>
    <property type="project" value="UniProtKB"/>
</dbReference>
<dbReference type="GO" id="GO:0035329">
    <property type="term" value="P:hippo signaling"/>
    <property type="evidence" value="ECO:0007669"/>
    <property type="project" value="Ensembl"/>
</dbReference>
<dbReference type="GO" id="GO:0008285">
    <property type="term" value="P:negative regulation of cell population proliferation"/>
    <property type="evidence" value="ECO:0000250"/>
    <property type="project" value="UniProtKB"/>
</dbReference>
<dbReference type="GO" id="GO:0035331">
    <property type="term" value="P:negative regulation of hippo signaling"/>
    <property type="evidence" value="ECO:0007669"/>
    <property type="project" value="Ensembl"/>
</dbReference>
<dbReference type="GO" id="GO:0046621">
    <property type="term" value="P:negative regulation of organ growth"/>
    <property type="evidence" value="ECO:0007669"/>
    <property type="project" value="Ensembl"/>
</dbReference>
<dbReference type="GO" id="GO:0000122">
    <property type="term" value="P:negative regulation of transcription by RNA polymerase II"/>
    <property type="evidence" value="ECO:0007669"/>
    <property type="project" value="Ensembl"/>
</dbReference>
<dbReference type="GO" id="GO:0043410">
    <property type="term" value="P:positive regulation of MAPK cascade"/>
    <property type="evidence" value="ECO:0000250"/>
    <property type="project" value="UniProtKB"/>
</dbReference>
<dbReference type="CDD" id="cd08680">
    <property type="entry name" value="C2_Kibra"/>
    <property type="match status" value="1"/>
</dbReference>
<dbReference type="CDD" id="cd00201">
    <property type="entry name" value="WW"/>
    <property type="match status" value="2"/>
</dbReference>
<dbReference type="FunFam" id="2.20.70.10:FF:000001">
    <property type="entry name" value="Membrane-associated guanylate kinase, WW and PDZ domain-containing protein 1"/>
    <property type="match status" value="1"/>
</dbReference>
<dbReference type="FunFam" id="2.60.40.150:FF:000084">
    <property type="entry name" value="Protein KIBRA isoform 1"/>
    <property type="match status" value="1"/>
</dbReference>
<dbReference type="FunFam" id="2.20.70.10:FF:000041">
    <property type="entry name" value="WW and C2 domain containing 1"/>
    <property type="match status" value="1"/>
</dbReference>
<dbReference type="Gene3D" id="2.20.70.10">
    <property type="match status" value="2"/>
</dbReference>
<dbReference type="Gene3D" id="2.60.40.150">
    <property type="entry name" value="C2 domain"/>
    <property type="match status" value="1"/>
</dbReference>
<dbReference type="InterPro" id="IPR000008">
    <property type="entry name" value="C2_dom"/>
</dbReference>
<dbReference type="InterPro" id="IPR035892">
    <property type="entry name" value="C2_domain_sf"/>
</dbReference>
<dbReference type="InterPro" id="IPR037771">
    <property type="entry name" value="C2_WWC"/>
</dbReference>
<dbReference type="InterPro" id="IPR001202">
    <property type="entry name" value="WW_dom"/>
</dbReference>
<dbReference type="InterPro" id="IPR036020">
    <property type="entry name" value="WW_dom_sf"/>
</dbReference>
<dbReference type="InterPro" id="IPR051105">
    <property type="entry name" value="WWC/KIBRA_Hippo_Reg"/>
</dbReference>
<dbReference type="PANTHER" id="PTHR14791">
    <property type="entry name" value="BOMB/KIRA PROTEINS"/>
    <property type="match status" value="1"/>
</dbReference>
<dbReference type="PANTHER" id="PTHR14791:SF22">
    <property type="entry name" value="PROTEIN KIBRA"/>
    <property type="match status" value="1"/>
</dbReference>
<dbReference type="Pfam" id="PF00168">
    <property type="entry name" value="C2"/>
    <property type="match status" value="1"/>
</dbReference>
<dbReference type="Pfam" id="PF00397">
    <property type="entry name" value="WW"/>
    <property type="match status" value="2"/>
</dbReference>
<dbReference type="SMART" id="SM00456">
    <property type="entry name" value="WW"/>
    <property type="match status" value="2"/>
</dbReference>
<dbReference type="SUPFAM" id="SSF49562">
    <property type="entry name" value="C2 domain (Calcium/lipid-binding domain, CaLB)"/>
    <property type="match status" value="1"/>
</dbReference>
<dbReference type="SUPFAM" id="SSF51045">
    <property type="entry name" value="WW domain"/>
    <property type="match status" value="2"/>
</dbReference>
<dbReference type="PROSITE" id="PS50004">
    <property type="entry name" value="C2"/>
    <property type="match status" value="1"/>
</dbReference>
<dbReference type="PROSITE" id="PS01159">
    <property type="entry name" value="WW_DOMAIN_1"/>
    <property type="match status" value="1"/>
</dbReference>
<dbReference type="PROSITE" id="PS50020">
    <property type="entry name" value="WW_DOMAIN_2"/>
    <property type="match status" value="2"/>
</dbReference>
<keyword id="KW-0002">3D-structure</keyword>
<keyword id="KW-0010">Activator</keyword>
<keyword id="KW-1003">Cell membrane</keyword>
<keyword id="KW-0966">Cell projection</keyword>
<keyword id="KW-0175">Coiled coil</keyword>
<keyword id="KW-0963">Cytoplasm</keyword>
<keyword id="KW-0472">Membrane</keyword>
<keyword id="KW-0539">Nucleus</keyword>
<keyword id="KW-0597">Phosphoprotein</keyword>
<keyword id="KW-1185">Reference proteome</keyword>
<keyword id="KW-0677">Repeat</keyword>
<keyword id="KW-0678">Repressor</keyword>
<keyword id="KW-0804">Transcription</keyword>
<keyword id="KW-0805">Transcription regulation</keyword>
<accession>Q5SXA9</accession>
<accession>Q571D0</accession>
<accession>Q8K1Y3</accession>
<accession>Q8VD17</accession>
<accession>Q922W3</accession>
<name>KIBRA_MOUSE</name>
<proteinExistence type="evidence at protein level"/>